<protein>
    <recommendedName>
        <fullName evidence="1">Photosystem II reaction center protein L</fullName>
        <shortName evidence="1">PSII-L</shortName>
    </recommendedName>
</protein>
<feature type="chain" id="PRO_0000219719" description="Photosystem II reaction center protein L">
    <location>
        <begin position="1"/>
        <end position="38"/>
    </location>
</feature>
<feature type="transmembrane region" description="Helical" evidence="1">
    <location>
        <begin position="17"/>
        <end position="37"/>
    </location>
</feature>
<evidence type="ECO:0000255" key="1">
    <source>
        <dbReference type="HAMAP-Rule" id="MF_01317"/>
    </source>
</evidence>
<keyword id="KW-0150">Chloroplast</keyword>
<keyword id="KW-0472">Membrane</keyword>
<keyword id="KW-0602">Photosynthesis</keyword>
<keyword id="KW-0604">Photosystem II</keyword>
<keyword id="KW-0934">Plastid</keyword>
<keyword id="KW-0674">Reaction center</keyword>
<keyword id="KW-0793">Thylakoid</keyword>
<keyword id="KW-0812">Transmembrane</keyword>
<keyword id="KW-1133">Transmembrane helix</keyword>
<sequence>MTQSNPNEQNVELNRTSLYWGLLLIFVLAVLFSNYFFN</sequence>
<accession>Q6W6R3</accession>
<gene>
    <name evidence="1" type="primary">psbL</name>
</gene>
<dbReference type="EMBL" id="AY309023">
    <property type="protein sequence ID" value="AAP70317.1"/>
    <property type="molecule type" value="Genomic_DNA"/>
</dbReference>
<dbReference type="RefSeq" id="YP_009156890.1">
    <property type="nucleotide sequence ID" value="NC_027476.1"/>
</dbReference>
<dbReference type="SMR" id="Q6W6R3"/>
<dbReference type="GeneID" id="25017695"/>
<dbReference type="GO" id="GO:0009535">
    <property type="term" value="C:chloroplast thylakoid membrane"/>
    <property type="evidence" value="ECO:0007669"/>
    <property type="project" value="UniProtKB-SubCell"/>
</dbReference>
<dbReference type="GO" id="GO:0009539">
    <property type="term" value="C:photosystem II reaction center"/>
    <property type="evidence" value="ECO:0007669"/>
    <property type="project" value="InterPro"/>
</dbReference>
<dbReference type="GO" id="GO:0015979">
    <property type="term" value="P:photosynthesis"/>
    <property type="evidence" value="ECO:0007669"/>
    <property type="project" value="UniProtKB-UniRule"/>
</dbReference>
<dbReference type="HAMAP" id="MF_01317">
    <property type="entry name" value="PSII_PsbL"/>
    <property type="match status" value="1"/>
</dbReference>
<dbReference type="InterPro" id="IPR003372">
    <property type="entry name" value="PSII_PsbL"/>
</dbReference>
<dbReference type="InterPro" id="IPR037266">
    <property type="entry name" value="PSII_PsbL_sf"/>
</dbReference>
<dbReference type="NCBIfam" id="NF001972">
    <property type="entry name" value="PRK00753.1"/>
    <property type="match status" value="1"/>
</dbReference>
<dbReference type="Pfam" id="PF02419">
    <property type="entry name" value="PsbL"/>
    <property type="match status" value="1"/>
</dbReference>
<dbReference type="SUPFAM" id="SSF161017">
    <property type="entry name" value="Photosystem II reaction center protein L, PsbL"/>
    <property type="match status" value="1"/>
</dbReference>
<proteinExistence type="inferred from homology"/>
<reference key="1">
    <citation type="submission" date="2003-05" db="EMBL/GenBank/DDBJ databases">
        <title>Chloroplast psbL and psbJ genes of Chinese Hordeum species.</title>
        <authorList>
            <person name="Wei Y.-M."/>
            <person name="Yan Z.-H."/>
            <person name="Wu W."/>
            <person name="Zhang Z.-Q."/>
            <person name="Zheng Y.-L."/>
        </authorList>
    </citation>
    <scope>NUCLEOTIDE SEQUENCE [GENOMIC DNA]</scope>
</reference>
<comment type="function">
    <text evidence="1">One of the components of the core complex of photosystem II (PSII). PSII is a light-driven water:plastoquinone oxidoreductase that uses light energy to abstract electrons from H(2)O, generating O(2) and a proton gradient subsequently used for ATP formation. It consists of a core antenna complex that captures photons, and an electron transfer chain that converts photonic excitation into a charge separation. This subunit is found at the monomer-monomer interface and is required for correct PSII assembly and/or dimerization.</text>
</comment>
<comment type="subunit">
    <text evidence="1">PSII is composed of 1 copy each of membrane proteins PsbA, PsbB, PsbC, PsbD, PsbE, PsbF, PsbH, PsbI, PsbJ, PsbK, PsbL, PsbM, PsbT, PsbX, PsbY, PsbZ, Psb30/Ycf12, at least 3 peripheral proteins of the oxygen-evolving complex and a large number of cofactors. It forms dimeric complexes.</text>
</comment>
<comment type="subcellular location">
    <subcellularLocation>
        <location evidence="1">Plastid</location>
        <location evidence="1">Chloroplast thylakoid membrane</location>
        <topology evidence="1">Single-pass membrane protein</topology>
    </subcellularLocation>
</comment>
<comment type="similarity">
    <text evidence="1">Belongs to the PsbL family.</text>
</comment>
<organism>
    <name type="scientific">Hordeum jubatum</name>
    <name type="common">Foxtail barley</name>
    <name type="synonym">Critesion jubatum</name>
    <dbReference type="NCBI Taxonomy" id="4517"/>
    <lineage>
        <taxon>Eukaryota</taxon>
        <taxon>Viridiplantae</taxon>
        <taxon>Streptophyta</taxon>
        <taxon>Embryophyta</taxon>
        <taxon>Tracheophyta</taxon>
        <taxon>Spermatophyta</taxon>
        <taxon>Magnoliopsida</taxon>
        <taxon>Liliopsida</taxon>
        <taxon>Poales</taxon>
        <taxon>Poaceae</taxon>
        <taxon>BOP clade</taxon>
        <taxon>Pooideae</taxon>
        <taxon>Triticodae</taxon>
        <taxon>Triticeae</taxon>
        <taxon>Hordeinae</taxon>
        <taxon>Hordeum</taxon>
    </lineage>
</organism>
<geneLocation type="chloroplast"/>
<name>PSBL_HORJU</name>